<gene>
    <name evidence="18" type="primary">cloA</name>
    <name evidence="17" type="synonym">p450-1</name>
</gene>
<name>CLOA_CLAPU</name>
<accession>Q2PBY6</accession>
<keyword id="KW-0325">Glycoprotein</keyword>
<keyword id="KW-0349">Heme</keyword>
<keyword id="KW-0408">Iron</keyword>
<keyword id="KW-0472">Membrane</keyword>
<keyword id="KW-0479">Metal-binding</keyword>
<keyword id="KW-0503">Monooxygenase</keyword>
<keyword id="KW-0560">Oxidoreductase</keyword>
<keyword id="KW-0812">Transmembrane</keyword>
<keyword id="KW-1133">Transmembrane helix</keyword>
<dbReference type="EC" id="1.-.-.-" evidence="9"/>
<dbReference type="EMBL" id="AJ884676">
    <property type="protein sequence ID" value="CAI59266.1"/>
    <property type="molecule type" value="Genomic_DNA"/>
</dbReference>
<dbReference type="SMR" id="Q2PBY6"/>
<dbReference type="GlyCosmos" id="Q2PBY6">
    <property type="glycosylation" value="1 site, No reported glycans"/>
</dbReference>
<dbReference type="KEGG" id="ag:CAI59266"/>
<dbReference type="VEuPathDB" id="FungiDB:CPUR_04082"/>
<dbReference type="BioCyc" id="MetaCyc:MONOMER-15622"/>
<dbReference type="UniPathway" id="UPA00327"/>
<dbReference type="GO" id="GO:0016020">
    <property type="term" value="C:membrane"/>
    <property type="evidence" value="ECO:0007669"/>
    <property type="project" value="UniProtKB-SubCell"/>
</dbReference>
<dbReference type="GO" id="GO:0020037">
    <property type="term" value="F:heme binding"/>
    <property type="evidence" value="ECO:0007669"/>
    <property type="project" value="InterPro"/>
</dbReference>
<dbReference type="GO" id="GO:0005506">
    <property type="term" value="F:iron ion binding"/>
    <property type="evidence" value="ECO:0007669"/>
    <property type="project" value="InterPro"/>
</dbReference>
<dbReference type="GO" id="GO:0004497">
    <property type="term" value="F:monooxygenase activity"/>
    <property type="evidence" value="ECO:0007669"/>
    <property type="project" value="UniProtKB-KW"/>
</dbReference>
<dbReference type="GO" id="GO:0016705">
    <property type="term" value="F:oxidoreductase activity, acting on paired donors, with incorporation or reduction of molecular oxygen"/>
    <property type="evidence" value="ECO:0007669"/>
    <property type="project" value="InterPro"/>
</dbReference>
<dbReference type="GO" id="GO:0035835">
    <property type="term" value="P:indole alkaloid biosynthetic process"/>
    <property type="evidence" value="ECO:0007669"/>
    <property type="project" value="UniProtKB-UniPathway"/>
</dbReference>
<dbReference type="CDD" id="cd11062">
    <property type="entry name" value="CYP58-like"/>
    <property type="match status" value="1"/>
</dbReference>
<dbReference type="Gene3D" id="1.10.630.10">
    <property type="entry name" value="Cytochrome P450"/>
    <property type="match status" value="1"/>
</dbReference>
<dbReference type="InterPro" id="IPR001128">
    <property type="entry name" value="Cyt_P450"/>
</dbReference>
<dbReference type="InterPro" id="IPR017972">
    <property type="entry name" value="Cyt_P450_CS"/>
</dbReference>
<dbReference type="InterPro" id="IPR002401">
    <property type="entry name" value="Cyt_P450_E_grp-I"/>
</dbReference>
<dbReference type="InterPro" id="IPR036396">
    <property type="entry name" value="Cyt_P450_sf"/>
</dbReference>
<dbReference type="InterPro" id="IPR050121">
    <property type="entry name" value="Cytochrome_P450_monoxygenase"/>
</dbReference>
<dbReference type="PANTHER" id="PTHR24305">
    <property type="entry name" value="CYTOCHROME P450"/>
    <property type="match status" value="1"/>
</dbReference>
<dbReference type="PANTHER" id="PTHR24305:SF210">
    <property type="entry name" value="CYTOCHROME P450 MONOOXYGENASE ASQL-RELATED"/>
    <property type="match status" value="1"/>
</dbReference>
<dbReference type="Pfam" id="PF00067">
    <property type="entry name" value="p450"/>
    <property type="match status" value="1"/>
</dbReference>
<dbReference type="PRINTS" id="PR00463">
    <property type="entry name" value="EP450I"/>
</dbReference>
<dbReference type="PRINTS" id="PR00385">
    <property type="entry name" value="P450"/>
</dbReference>
<dbReference type="SUPFAM" id="SSF48264">
    <property type="entry name" value="Cytochrome P450"/>
    <property type="match status" value="1"/>
</dbReference>
<dbReference type="PROSITE" id="PS00086">
    <property type="entry name" value="CYTOCHROME_P450"/>
    <property type="match status" value="1"/>
</dbReference>
<feature type="chain" id="PRO_0000439115" description="Cytochrome P450 monooxygenase cloA">
    <location>
        <begin position="1"/>
        <end position="507"/>
    </location>
</feature>
<feature type="transmembrane region" description="Helical" evidence="3">
    <location>
        <begin position="15"/>
        <end position="35"/>
    </location>
</feature>
<feature type="binding site" description="axial binding residue" evidence="1">
    <location>
        <position position="450"/>
    </location>
    <ligand>
        <name>heme</name>
        <dbReference type="ChEBI" id="CHEBI:30413"/>
    </ligand>
    <ligandPart>
        <name>Fe</name>
        <dbReference type="ChEBI" id="CHEBI:18248"/>
    </ligandPart>
</feature>
<feature type="glycosylation site" description="N-linked (GlcNAc...) asparagine" evidence="4">
    <location>
        <position position="247"/>
    </location>
</feature>
<protein>
    <recommendedName>
        <fullName evidence="17">Cytochrome P450 monooxygenase cloA</fullName>
        <ecNumber evidence="9">1.-.-.-</ecNumber>
    </recommendedName>
    <alternativeName>
        <fullName evidence="18">Clavine oxidase</fullName>
        <shortName evidence="18">CLOA</shortName>
    </alternativeName>
    <alternativeName>
        <fullName evidence="17">Ergot alkaloid synthesis protein cloA</fullName>
    </alternativeName>
</protein>
<reference key="1">
    <citation type="journal article" date="2005" name="Phytochemistry">
        <title>The ergot alkaloid gene cluster in Claviceps purpurea: extension of the cluster sequence and intra species evolution.</title>
        <authorList>
            <person name="Haarmann T."/>
            <person name="Machado C."/>
            <person name="Lubbe Y."/>
            <person name="Correia T."/>
            <person name="Schardl C.L."/>
            <person name="Panaccione D.G."/>
            <person name="Tudzynski P."/>
        </authorList>
    </citation>
    <scope>NUCLEOTIDE SEQUENCE [GENOMIC DNA]</scope>
    <scope>FUNCTION</scope>
    <scope>IDENTIFICATION IN THE EAS CLUSTER</scope>
    <source>
        <strain>P1 / 1029/N5</strain>
    </source>
</reference>
<reference key="2">
    <citation type="journal article" date="1999" name="Mol. Gen. Genet.">
        <title>Evidence for an ergot alkaloid gene cluster in Claviceps purpurea.</title>
        <authorList>
            <person name="Tudzynski P."/>
            <person name="Hoelter K."/>
            <person name="Correia T.H."/>
            <person name="Arntz C."/>
            <person name="Grammel N."/>
            <person name="Keller U."/>
        </authorList>
    </citation>
    <scope>IDENTIFICATION IN THE EAS CLUSTER</scope>
    <scope>FUNCTION</scope>
    <source>
        <strain>P1 / 1029/N5</strain>
    </source>
</reference>
<reference key="3">
    <citation type="journal article" date="2001" name="Appl. Microbiol. Biotechnol.">
        <title>Biotechnology and genetics of ergot alkaloids.</title>
        <authorList>
            <person name="Tudzynski P."/>
            <person name="Correia T."/>
            <person name="Keller U."/>
        </authorList>
    </citation>
    <scope>BIOTECHNOLOGY</scope>
    <source>
        <strain>P1 / 1029/N5</strain>
    </source>
</reference>
<reference key="4">
    <citation type="journal article" date="2003" name="Chem. Biol.">
        <title>Molecular cloning and analysis of the ergopeptine assembly system in the ergot fungus Claviceps purpurea.</title>
        <authorList>
            <person name="Correia T."/>
            <person name="Grammel N."/>
            <person name="Ortel I."/>
            <person name="Keller U."/>
            <person name="Tudzynski P."/>
        </authorList>
    </citation>
    <scope>FUNCTION</scope>
</reference>
<reference key="5">
    <citation type="journal article" date="2004" name="Fungal Genet. Biol.">
        <title>The determinant step in ergot alkaloid biosynthesis by an endophyte of perennial ryegrass.</title>
        <authorList>
            <person name="Wang J."/>
            <person name="Machado C."/>
            <person name="Panaccione D.G."/>
            <person name="Tsai H.-F."/>
            <person name="Schardl C.L."/>
        </authorList>
    </citation>
    <scope>FUNCTION</scope>
    <source>
        <strain>ATCC 20102 / Farmitalia FI 32/17</strain>
    </source>
</reference>
<reference key="6">
    <citation type="journal article" date="2006" name="ChemBioChem">
        <title>Identification of the cytochrome P450 monooxygenase that bridges the clavine and ergoline alkaloid pathways.</title>
        <authorList>
            <person name="Haarmann T."/>
            <person name="Ortel I."/>
            <person name="Tudzynski P."/>
            <person name="Keller U."/>
        </authorList>
    </citation>
    <scope>FUNCTION</scope>
    <scope>DISRUPTION PHENOTYPE</scope>
    <scope>CATALYTIC ACTIVITY</scope>
    <scope>PATHWAY</scope>
    <source>
        <strain>P1 / 1029/N5</strain>
    </source>
</reference>
<reference key="7">
    <citation type="journal article" date="2007" name="Appl. Environ. Microbiol.">
        <title>A complex ergovaline gene cluster in epichloe endophytes of grasses.</title>
        <authorList>
            <person name="Fleetwood D.J."/>
            <person name="Scott B."/>
            <person name="Lane G.A."/>
            <person name="Tanaka A."/>
            <person name="Johnson R.D."/>
        </authorList>
    </citation>
    <scope>FUNCTION</scope>
</reference>
<reference key="8">
    <citation type="journal article" date="2007" name="Appl. Environ. Microbiol.">
        <title>Comparison of ergot alkaloid biosynthesis gene clusters in Claviceps species indicates loss of late pathway steps in evolution of C. fusiformis.</title>
        <authorList>
            <person name="Lorenz N."/>
            <person name="Wilson E.V."/>
            <person name="Machado C."/>
            <person name="Schardl C.L."/>
            <person name="Tudzynski P."/>
        </authorList>
    </citation>
    <scope>FUNCTION</scope>
</reference>
<reference key="9">
    <citation type="journal article" date="2008" name="Fungal Genet. Biol.">
        <title>Use of a nonhomologous end joining deficient strain (Deltaku70) of the ergot fungus Claviceps purpurea for identification of a nonribosomal peptide synthetase gene involved in ergotamine biosynthesis.</title>
        <authorList>
            <person name="Haarmann T."/>
            <person name="Lorenz N."/>
            <person name="Tudzynski P."/>
        </authorList>
    </citation>
    <scope>FUNCTION</scope>
</reference>
<reference key="10">
    <citation type="journal article" date="2009" name="J. Biol. Chem.">
        <title>Combinatorial assembly of simple and complex D-lysergic acid alkaloid peptide classes in the ergot fungus Claviceps purpurea.</title>
        <authorList>
            <person name="Ortel I."/>
            <person name="Keller U."/>
        </authorList>
    </citation>
    <scope>FUNCTION</scope>
</reference>
<reference key="11">
    <citation type="journal article" date="2010" name="Appl. Environ. Microbiol.">
        <title>Alkaloid cluster gene ccsA of the ergot fungus Claviceps purpurea encodes chanoclavine I synthase, a flavin adenine dinucleotide-containing oxidoreductase mediating the transformation of N-methyl-dimethylallyltryptophan to chanoclavine I.</title>
        <authorList>
            <person name="Lorenz N."/>
            <person name="Olsovska J."/>
            <person name="Sulc M."/>
            <person name="Tudzynski P."/>
        </authorList>
    </citation>
    <scope>FUNCTION</scope>
</reference>
<reference key="12">
    <citation type="journal article" date="2010" name="J. Am. Chem. Soc.">
        <title>Controlling a structural branch point in ergot alkaloid biosynthesis.</title>
        <authorList>
            <person name="Cheng J.Z."/>
            <person name="Coyle C.M."/>
            <person name="Panaccione D.G."/>
            <person name="O'Connor S.E."/>
        </authorList>
    </citation>
    <scope>FUNCTION</scope>
    <source>
        <strain>ATCC 20102 / Farmitalia FI 32/17</strain>
    </source>
</reference>
<reference key="13">
    <citation type="journal article" date="2011" name="Curr. Genet.">
        <title>Ergot cluster-encoded catalase is required for synthesis of chanoclavine-I in Aspergillus fumigatus.</title>
        <authorList>
            <person name="Goetz K.E."/>
            <person name="Coyle C.M."/>
            <person name="Cheng J.Z."/>
            <person name="O'Connor S.E."/>
            <person name="Panaccione D.G."/>
        </authorList>
    </citation>
    <scope>FUNCTION</scope>
</reference>
<reference key="14">
    <citation type="journal article" date="2011" name="Org. Biomol. Chem.">
        <title>New insights into ergot alkaloid biosynthesis in Claviceps purpurea: an agroclavine synthase EasG catalyses, via a non-enzymatic adduct with reduced glutathione, the conversion of chanoclavine-I aldehyde to agroclavine.</title>
        <authorList>
            <person name="Matuschek M."/>
            <person name="Wallwey C."/>
            <person name="Xie X."/>
            <person name="Li S.M."/>
        </authorList>
    </citation>
    <scope>FUNCTION</scope>
</reference>
<reference key="15">
    <citation type="journal article" date="2014" name="Chem. Biol.">
        <title>Cyclolization of D-lysergic acid alkaloid peptides.</title>
        <authorList>
            <person name="Havemann J."/>
            <person name="Vogel D."/>
            <person name="Loll B."/>
            <person name="Keller U."/>
        </authorList>
    </citation>
    <scope>FUNCTION</scope>
</reference>
<organism>
    <name type="scientific">Claviceps purpurea</name>
    <name type="common">Ergot fungus</name>
    <name type="synonym">Sphacelia segetum</name>
    <dbReference type="NCBI Taxonomy" id="5111"/>
    <lineage>
        <taxon>Eukaryota</taxon>
        <taxon>Fungi</taxon>
        <taxon>Dikarya</taxon>
        <taxon>Ascomycota</taxon>
        <taxon>Pezizomycotina</taxon>
        <taxon>Sordariomycetes</taxon>
        <taxon>Hypocreomycetidae</taxon>
        <taxon>Hypocreales</taxon>
        <taxon>Clavicipitaceae</taxon>
        <taxon>Claviceps</taxon>
    </lineage>
</organism>
<comment type="function">
    <text evidence="2 5 6 7 8 9 10 11 12 13 14 15 16 20 21">Cytochrome P450 monooxygenase; part of the gene cluster that mediates the biosynthesis of fungal ergot alkaloid (PubMed:10071219, PubMed:14700635, PubMed:14732265, PubMed:15904941, PubMed:17308187, PubMed:17720822). DmaW catalyzes the first step of ergot alkaloid biosynthesis by condensing dimethylallyl diphosphate (DMAP) and tryptophan to form 4-dimethylallyl-L-tryptophan (PubMed:14732265). The second step is catalyzed by the methyltransferase easF that methylates 4-dimethylallyl-L-tryptophan in the presence of S-adenosyl-L-methionine, resulting in the formation of 4-dimethylallyl-L-abrine (By similarity). The catalase easC and the FAD-dependent oxidoreductase easE then transform 4-dimethylallyl-L-abrine to chanoclavine-I which is further oxidized by easD in the presence of NAD(+), resulting in the formation of chanoclavine-I aldehyde (PubMed:20118373, PubMed:21409592). Agroclavine dehydrogenase easG then mediates the conversion of chanoclavine-I aldehyde to agroclavine via a non-enzymatic adduct reaction: the substrate is an iminium intermediate that is formed spontaneously from chanoclavine-I aldehyde in the presence of glutathione (PubMed:20735127, PubMed:21494745). The presence of easA is not required to complete this reaction (PubMed:21494745). Further conversion of agroclavine to paspalic acid is a two-step process involving oxidation of agroclavine to elymoclavine and of elymoclavine to paspalic acid, the second step being performed by the elymoclavine oxidase cloA (PubMed:16538694, PubMed:17720822). Paspalic acid is then further converted to D-lysergic acid (PubMed:15904941). Ergopeptines are assembled from D-lysergic acid and three different amino acids by the D-lysergyl-peptide-synthetases composed each of a monomudular and a trimodular nonribosomal peptide synthetase subunit (PubMed:14700635, PubMed:15904941). LpsB and lpsC encode the monomodular subunits responsible for D-lysergic acid activation and incorporation into the ergopeptine backbone (PubMed:14700635). LpsA1 and A2 subunits encode the trimodular nonribosomal peptide synthetase assembling the tripeptide portion of ergopeptines (PubMed:14700635). LpsA1 is responsible for formation of the major ergopeptine, ergotamine, and lpsA2 for alpha-ergocryptine, the minor ergopeptine of the total alkaloid mixture elaborated by C.purpurea (PubMed:17560817, PubMed:19139103). D-lysergyl-tripeptides are assembled by the nonribosomal peptide synthetases and released as N-(D-lysergyl-aminoacyl)-lactams (PubMed:24361048). Cyclolization of the D-lysergyl-tripeptides is performed by the Fe(2+)/2-ketoglutarate-dependent dioxygenase easH which introduces a hydroxyl group into N-(D-lysergyl-aminoacyl)-lactam at alpha-C of the aminoacyl residue followed by spontaneous condensation with the terminal lactam carbonyl group (PubMed:24361048).</text>
</comment>
<comment type="cofactor">
    <cofactor evidence="1">
        <name>heme</name>
        <dbReference type="ChEBI" id="CHEBI:30413"/>
    </cofactor>
</comment>
<comment type="pathway">
    <text evidence="9">Alkaloid biosynthesis; ergot alkaloid biosynthesis.</text>
</comment>
<comment type="subcellular location">
    <subcellularLocation>
        <location evidence="3">Membrane</location>
        <topology evidence="3">Single-pass membrane protein</topology>
    </subcellularLocation>
</comment>
<comment type="disruption phenotype">
    <text evidence="9">Causes a blockage in the conversion of clavines to D-lysergic acid (PubMed:16538694). Abolishes the production of the peptide alkaloids ergotamine and ergocryptine but accumulates substantial amounts agroclavine accompanied by varying amounts of elymoclavine and chanoclavine which ranged between 10 and 20 percent of the amount of agroclavine formed (PubMed:16538694). Also leads to traces of chanoclavine aldehyde (PubMed:16538694).</text>
</comment>
<comment type="similarity">
    <text evidence="19">Belongs to the cytochrome P450 family.</text>
</comment>
<sequence length="507" mass="58169">MSLQWLQQTRHELSWTWILLTTCIALTSPLVLKGIYNVYFHPLRNIPGPKLAALTDFYAFYWNWIRDEGYSKQFSRLHEQYNSPIIRIGPNNVHTTQVEFYDVIFKSGSKWLKDKSFYKYFNGLDAMIEPYQYRTYRTHLAPLYAQRAIDGLAPKLRSDLTNSASGMMRQTENGQTVNMAKVLRTLSTSMILHNLFSLDISLNDGDEYHPFLEAFEQLMTQSWLFVTYPMVPMVLSLIPGTSFARFNSSYTTFSNYCTAWNDEDMRKQRESEGQSTRDSHTRRYLSLKDDDARKKTAIPYPLDDVFNFVAGGSDTTAYTTACAFYHILSSPTVRENLVVELDEHSSIIRDEFDYNKIQNLPYLNAVIKETLRISVPVPGSLPRIVPQGGITIGSFSLPAGTGVSITQQAISFNEKIFPLPHSFLPERWIGPKSVGLDKWNIAFSRGPRQCIGTTLAYLELRCVIAYFFSRFDMALTGNCGDQLRWVDRFVAVNLDDVEVQILADRWT</sequence>
<proteinExistence type="evidence at protein level"/>
<evidence type="ECO:0000250" key="1">
    <source>
        <dbReference type="UniProtKB" id="P04798"/>
    </source>
</evidence>
<evidence type="ECO:0000250" key="2">
    <source>
        <dbReference type="UniProtKB" id="Q50EL0"/>
    </source>
</evidence>
<evidence type="ECO:0000255" key="3"/>
<evidence type="ECO:0000255" key="4">
    <source>
        <dbReference type="PROSITE-ProRule" id="PRU00498"/>
    </source>
</evidence>
<evidence type="ECO:0000269" key="5">
    <source>
    </source>
</evidence>
<evidence type="ECO:0000269" key="6">
    <source>
    </source>
</evidence>
<evidence type="ECO:0000269" key="7">
    <source>
    </source>
</evidence>
<evidence type="ECO:0000269" key="8">
    <source>
    </source>
</evidence>
<evidence type="ECO:0000269" key="9">
    <source>
    </source>
</evidence>
<evidence type="ECO:0000269" key="10">
    <source>
    </source>
</evidence>
<evidence type="ECO:0000269" key="11">
    <source>
    </source>
</evidence>
<evidence type="ECO:0000269" key="12">
    <source>
    </source>
</evidence>
<evidence type="ECO:0000269" key="13">
    <source>
    </source>
</evidence>
<evidence type="ECO:0000269" key="14">
    <source>
    </source>
</evidence>
<evidence type="ECO:0000269" key="15">
    <source>
    </source>
</evidence>
<evidence type="ECO:0000269" key="16">
    <source>
    </source>
</evidence>
<evidence type="ECO:0000303" key="17">
    <source>
    </source>
</evidence>
<evidence type="ECO:0000303" key="18">
    <source>
    </source>
</evidence>
<evidence type="ECO:0000305" key="19"/>
<evidence type="ECO:0000305" key="20">
    <source>
    </source>
</evidence>
<evidence type="ECO:0000305" key="21">
    <source>
    </source>
</evidence>